<dbReference type="EMBL" id="CP000675">
    <property type="protein sequence ID" value="ABQ56268.1"/>
    <property type="molecule type" value="Genomic_DNA"/>
</dbReference>
<dbReference type="RefSeq" id="WP_011946033.1">
    <property type="nucleotide sequence ID" value="NC_009494.2"/>
</dbReference>
<dbReference type="SMR" id="A5IFW8"/>
<dbReference type="KEGG" id="lpc:LPC_2346"/>
<dbReference type="HOGENOM" id="CLU_066645_1_0_6"/>
<dbReference type="GO" id="GO:0043590">
    <property type="term" value="C:bacterial nucleoid"/>
    <property type="evidence" value="ECO:0007669"/>
    <property type="project" value="TreeGrafter"/>
</dbReference>
<dbReference type="GO" id="GO:0006310">
    <property type="term" value="P:DNA recombination"/>
    <property type="evidence" value="ECO:0007669"/>
    <property type="project" value="UniProtKB-UniRule"/>
</dbReference>
<dbReference type="GO" id="GO:0006302">
    <property type="term" value="P:double-strand break repair"/>
    <property type="evidence" value="ECO:0007669"/>
    <property type="project" value="TreeGrafter"/>
</dbReference>
<dbReference type="Gene3D" id="2.40.50.140">
    <property type="entry name" value="Nucleic acid-binding proteins"/>
    <property type="match status" value="1"/>
</dbReference>
<dbReference type="Gene3D" id="1.20.1440.120">
    <property type="entry name" value="Recombination protein O, C-terminal domain"/>
    <property type="match status" value="1"/>
</dbReference>
<dbReference type="HAMAP" id="MF_00201">
    <property type="entry name" value="RecO"/>
    <property type="match status" value="1"/>
</dbReference>
<dbReference type="InterPro" id="IPR022572">
    <property type="entry name" value="DNA_rep/recomb_RecO_N"/>
</dbReference>
<dbReference type="InterPro" id="IPR012340">
    <property type="entry name" value="NA-bd_OB-fold"/>
</dbReference>
<dbReference type="InterPro" id="IPR003717">
    <property type="entry name" value="RecO"/>
</dbReference>
<dbReference type="InterPro" id="IPR042242">
    <property type="entry name" value="RecO_C"/>
</dbReference>
<dbReference type="NCBIfam" id="TIGR00613">
    <property type="entry name" value="reco"/>
    <property type="match status" value="1"/>
</dbReference>
<dbReference type="PANTHER" id="PTHR33991">
    <property type="entry name" value="DNA REPAIR PROTEIN RECO"/>
    <property type="match status" value="1"/>
</dbReference>
<dbReference type="PANTHER" id="PTHR33991:SF1">
    <property type="entry name" value="DNA REPAIR PROTEIN RECO"/>
    <property type="match status" value="1"/>
</dbReference>
<dbReference type="Pfam" id="PF02565">
    <property type="entry name" value="RecO_C"/>
    <property type="match status" value="1"/>
</dbReference>
<dbReference type="Pfam" id="PF11967">
    <property type="entry name" value="RecO_N"/>
    <property type="match status" value="1"/>
</dbReference>
<dbReference type="SUPFAM" id="SSF50249">
    <property type="entry name" value="Nucleic acid-binding proteins"/>
    <property type="match status" value="1"/>
</dbReference>
<proteinExistence type="inferred from homology"/>
<gene>
    <name evidence="1" type="primary">recO</name>
    <name type="ordered locus">LPC_2346</name>
</gene>
<protein>
    <recommendedName>
        <fullName evidence="1">DNA repair protein RecO</fullName>
    </recommendedName>
    <alternativeName>
        <fullName evidence="1">Recombination protein O</fullName>
    </alternativeName>
</protein>
<keyword id="KW-0227">DNA damage</keyword>
<keyword id="KW-0233">DNA recombination</keyword>
<keyword id="KW-0234">DNA repair</keyword>
<accession>A5IFW8</accession>
<evidence type="ECO:0000255" key="1">
    <source>
        <dbReference type="HAMAP-Rule" id="MF_00201"/>
    </source>
</evidence>
<feature type="chain" id="PRO_1000193386" description="DNA repair protein RecO">
    <location>
        <begin position="1"/>
        <end position="229"/>
    </location>
</feature>
<organism>
    <name type="scientific">Legionella pneumophila (strain Corby)</name>
    <dbReference type="NCBI Taxonomy" id="400673"/>
    <lineage>
        <taxon>Bacteria</taxon>
        <taxon>Pseudomonadati</taxon>
        <taxon>Pseudomonadota</taxon>
        <taxon>Gammaproteobacteria</taxon>
        <taxon>Legionellales</taxon>
        <taxon>Legionellaceae</taxon>
        <taxon>Legionella</taxon>
    </lineage>
</organism>
<reference key="1">
    <citation type="submission" date="2006-11" db="EMBL/GenBank/DDBJ databases">
        <title>Identification and characterization of a new conjugation/ type IVA secretion system (trb/tra) of L. pneumophila Corby localized on a mobile genomic island.</title>
        <authorList>
            <person name="Gloeckner G."/>
            <person name="Albert-Weissenberger C."/>
            <person name="Weinmann E."/>
            <person name="Jacobi S."/>
            <person name="Schunder E."/>
            <person name="Steinert M."/>
            <person name="Buchrieser C."/>
            <person name="Hacker J."/>
            <person name="Heuner K."/>
        </authorList>
    </citation>
    <scope>NUCLEOTIDE SEQUENCE [LARGE SCALE GENOMIC DNA]</scope>
    <source>
        <strain>Corby</strain>
    </source>
</reference>
<name>RECO_LEGPC</name>
<comment type="function">
    <text evidence="1">Involved in DNA repair and RecF pathway recombination.</text>
</comment>
<comment type="similarity">
    <text evidence="1">Belongs to the RecO family.</text>
</comment>
<sequence length="229" mass="25989">MTSKSLNAWVIHKQWSGDTSARLKLFTREMGLINCLCKGGRTPKKQSLLQAFIPLWVSIEERYDQYYTRNIESTSSRLDLEGHSLFSGLYINELLYYTLSPDFPDPDLFDAYLFTLNGIALAREREVIEALLRRFEWALLKACGYTFSFLHEARTGELIVPDSYYQFVAGEGFILGGDKKIPGEHLLAIAADNLSESAYLKSAKFIMRQAIDHLLGGREIKARSLYGPA</sequence>